<organism>
    <name type="scientific">Gallus gallus</name>
    <name type="common">Chicken</name>
    <dbReference type="NCBI Taxonomy" id="9031"/>
    <lineage>
        <taxon>Eukaryota</taxon>
        <taxon>Metazoa</taxon>
        <taxon>Chordata</taxon>
        <taxon>Craniata</taxon>
        <taxon>Vertebrata</taxon>
        <taxon>Euteleostomi</taxon>
        <taxon>Archelosauria</taxon>
        <taxon>Archosauria</taxon>
        <taxon>Dinosauria</taxon>
        <taxon>Saurischia</taxon>
        <taxon>Theropoda</taxon>
        <taxon>Coelurosauria</taxon>
        <taxon>Aves</taxon>
        <taxon>Neognathae</taxon>
        <taxon>Galloanserae</taxon>
        <taxon>Galliformes</taxon>
        <taxon>Phasianidae</taxon>
        <taxon>Phasianinae</taxon>
        <taxon>Gallus</taxon>
    </lineage>
</organism>
<gene>
    <name type="primary">RAB8A</name>
    <name type="ORF">RCJMB04_2k8</name>
</gene>
<accession>Q5F470</accession>
<keyword id="KW-1003">Cell membrane</keyword>
<keyword id="KW-0966">Cell projection</keyword>
<keyword id="KW-0963">Cytoplasm</keyword>
<keyword id="KW-0968">Cytoplasmic vesicle</keyword>
<keyword id="KW-0206">Cytoskeleton</keyword>
<keyword id="KW-0967">Endosome</keyword>
<keyword id="KW-0333">Golgi apparatus</keyword>
<keyword id="KW-0342">GTP-binding</keyword>
<keyword id="KW-0378">Hydrolase</keyword>
<keyword id="KW-0449">Lipoprotein</keyword>
<keyword id="KW-0460">Magnesium</keyword>
<keyword id="KW-0472">Membrane</keyword>
<keyword id="KW-0479">Metal-binding</keyword>
<keyword id="KW-0488">Methylation</keyword>
<keyword id="KW-0547">Nucleotide-binding</keyword>
<keyword id="KW-0636">Prenylation</keyword>
<keyword id="KW-0653">Protein transport</keyword>
<keyword id="KW-0656">Proto-oncogene</keyword>
<keyword id="KW-1185">Reference proteome</keyword>
<keyword id="KW-0813">Transport</keyword>
<evidence type="ECO:0000250" key="1"/>
<evidence type="ECO:0000250" key="2">
    <source>
        <dbReference type="UniProtKB" id="P35280"/>
    </source>
</evidence>
<evidence type="ECO:0000250" key="3">
    <source>
        <dbReference type="UniProtKB" id="P55258"/>
    </source>
</evidence>
<evidence type="ECO:0000250" key="4">
    <source>
        <dbReference type="UniProtKB" id="P61006"/>
    </source>
</evidence>
<evidence type="ECO:0000250" key="5">
    <source>
        <dbReference type="UniProtKB" id="P62820"/>
    </source>
</evidence>
<evidence type="ECO:0000250" key="6">
    <source>
        <dbReference type="UniProtKB" id="Q92930"/>
    </source>
</evidence>
<evidence type="ECO:0000255" key="7"/>
<evidence type="ECO:0000305" key="8"/>
<feature type="chain" id="PRO_0000260749" description="Ras-related protein Rab-8A">
    <location>
        <begin position="1"/>
        <end position="204"/>
    </location>
</feature>
<feature type="propeptide" id="PRO_0000370798" description="Removed in mature form" evidence="7">
    <location>
        <begin position="205"/>
        <end position="207"/>
    </location>
</feature>
<feature type="short sequence motif" description="Switch 1" evidence="5">
    <location>
        <begin position="31"/>
        <end position="45"/>
    </location>
</feature>
<feature type="short sequence motif" description="Switch 2" evidence="5">
    <location>
        <begin position="63"/>
        <end position="80"/>
    </location>
</feature>
<feature type="binding site" evidence="4">
    <location>
        <position position="17"/>
    </location>
    <ligand>
        <name>GTP</name>
        <dbReference type="ChEBI" id="CHEBI:37565"/>
    </ligand>
</feature>
<feature type="binding site" evidence="4">
    <location>
        <position position="18"/>
    </location>
    <ligand>
        <name>GTP</name>
        <dbReference type="ChEBI" id="CHEBI:37565"/>
    </ligand>
</feature>
<feature type="binding site" evidence="4">
    <location>
        <position position="19"/>
    </location>
    <ligand>
        <name>GTP</name>
        <dbReference type="ChEBI" id="CHEBI:37565"/>
    </ligand>
</feature>
<feature type="binding site" evidence="4">
    <location>
        <position position="20"/>
    </location>
    <ligand>
        <name>GTP</name>
        <dbReference type="ChEBI" id="CHEBI:37565"/>
    </ligand>
</feature>
<feature type="binding site" evidence="4">
    <location>
        <position position="21"/>
    </location>
    <ligand>
        <name>GTP</name>
        <dbReference type="ChEBI" id="CHEBI:37565"/>
    </ligand>
</feature>
<feature type="binding site" evidence="4">
    <location>
        <position position="22"/>
    </location>
    <ligand>
        <name>GTP</name>
        <dbReference type="ChEBI" id="CHEBI:37565"/>
    </ligand>
</feature>
<feature type="binding site" evidence="4">
    <location>
        <position position="22"/>
    </location>
    <ligand>
        <name>Mg(2+)</name>
        <dbReference type="ChEBI" id="CHEBI:18420"/>
    </ligand>
</feature>
<feature type="binding site" evidence="4">
    <location>
        <position position="23"/>
    </location>
    <ligand>
        <name>GTP</name>
        <dbReference type="ChEBI" id="CHEBI:37565"/>
    </ligand>
</feature>
<feature type="binding site" evidence="4">
    <location>
        <position position="39"/>
    </location>
    <ligand>
        <name>GTP</name>
        <dbReference type="ChEBI" id="CHEBI:37565"/>
    </ligand>
</feature>
<feature type="binding site" evidence="4">
    <location>
        <position position="40"/>
    </location>
    <ligand>
        <name>GTP</name>
        <dbReference type="ChEBI" id="CHEBI:37565"/>
    </ligand>
</feature>
<feature type="binding site" evidence="4">
    <location>
        <position position="40"/>
    </location>
    <ligand>
        <name>Mg(2+)</name>
        <dbReference type="ChEBI" id="CHEBI:18420"/>
    </ligand>
</feature>
<feature type="binding site" evidence="4">
    <location>
        <position position="63"/>
    </location>
    <ligand>
        <name>Mg(2+)</name>
        <dbReference type="ChEBI" id="CHEBI:18420"/>
    </ligand>
</feature>
<feature type="binding site" evidence="4">
    <location>
        <position position="66"/>
    </location>
    <ligand>
        <name>GTP</name>
        <dbReference type="ChEBI" id="CHEBI:37565"/>
    </ligand>
</feature>
<feature type="binding site" evidence="4">
    <location>
        <position position="121"/>
    </location>
    <ligand>
        <name>GTP</name>
        <dbReference type="ChEBI" id="CHEBI:37565"/>
    </ligand>
</feature>
<feature type="binding site" evidence="4">
    <location>
        <position position="122"/>
    </location>
    <ligand>
        <name>GTP</name>
        <dbReference type="ChEBI" id="CHEBI:37565"/>
    </ligand>
</feature>
<feature type="binding site" evidence="4">
    <location>
        <position position="124"/>
    </location>
    <ligand>
        <name>GTP</name>
        <dbReference type="ChEBI" id="CHEBI:37565"/>
    </ligand>
</feature>
<feature type="binding site" evidence="4">
    <location>
        <position position="152"/>
    </location>
    <ligand>
        <name>GTP</name>
        <dbReference type="ChEBI" id="CHEBI:37565"/>
    </ligand>
</feature>
<feature type="binding site" evidence="4">
    <location>
        <position position="153"/>
    </location>
    <ligand>
        <name>GTP</name>
        <dbReference type="ChEBI" id="CHEBI:37565"/>
    </ligand>
</feature>
<feature type="modified residue" description="Cysteine methyl ester" evidence="7">
    <location>
        <position position="204"/>
    </location>
</feature>
<feature type="lipid moiety-binding region" description="S-geranylgeranyl cysteine" evidence="1">
    <location>
        <position position="204"/>
    </location>
</feature>
<sequence length="207" mass="23522">MAKTYDYLFKLLLIGDSGVGKTCALFRFSEDAFNATFISTIGIDFKIRTIELDGKRIKLQIWDTAGQERFRTITTAYYRGAMGIMLVYDITNEKSFENIRNWVRNIEEHASPDVEKMILGNKCDANDKRQVSREQGEKLAASFGIKFMETSAKANINIENAFFTLARDIKAKMDKKLEGNSPQGSNQGVKITPDQQKKSSFFRCVLL</sequence>
<comment type="function">
    <text evidence="2 3 4">The small GTPases Rab are key regulators of intracellular membrane trafficking, from the formation of transport vesicles to their fusion with membranes. Rabs cycle between an inactive GDP-bound form and an active GTP-bound form that is able to recruit to membranes different sets of downstream effectors directly responsible for vesicle formation, movement, tethering and fusion. RAB8A is involved in polarized vesicular trafficking and neurotransmitter release. Together with RAB11A, RAB3IP, the exocyst complex, PARD3, PRKCI, ANXA2, CDC42 and DNMBP promotes transcytosis of PODXL to the apical membrane initiation sites (AMIS), apical surface formation and lumenogenesis. Regulates the compacted morphology of the Golgi. Together with MYO5B and RAB11A participates in epithelial cell polarization. Also involved in membrane trafficking to the cilium and ciliogenesis (By similarity). Together with MICALL2, may also regulate adherens junction assembly (By similarity). May play a role in insulin-induced transport to the plasma membrane of the glucose transporter GLUT4 and therefore play a role in glucose homeostasis (By similarity). Involved in autophagy. Participates in the export of a subset of neosynthesized proteins through a Rab8-Rab10-Rab11-dependent endososomal export route. Targeted to and stabilized on stressed lysosomes through LRRK2 phosphorylation. Suppresses stress-induced lysosomal enlargement through EHBP1 and EHNP1L1 effector proteins (By similarity).</text>
</comment>
<comment type="catalytic activity">
    <reaction evidence="4">
        <text>GTP + H2O = GDP + phosphate + H(+)</text>
        <dbReference type="Rhea" id="RHEA:19669"/>
        <dbReference type="ChEBI" id="CHEBI:15377"/>
        <dbReference type="ChEBI" id="CHEBI:15378"/>
        <dbReference type="ChEBI" id="CHEBI:37565"/>
        <dbReference type="ChEBI" id="CHEBI:43474"/>
        <dbReference type="ChEBI" id="CHEBI:58189"/>
        <dbReference type="EC" id="3.6.5.2"/>
    </reaction>
    <physiologicalReaction direction="left-to-right" evidence="4">
        <dbReference type="Rhea" id="RHEA:19670"/>
    </physiologicalReaction>
</comment>
<comment type="cofactor">
    <cofactor evidence="4">
        <name>Mg(2+)</name>
        <dbReference type="ChEBI" id="CHEBI:18420"/>
    </cofactor>
</comment>
<comment type="activity regulation">
    <text evidence="2 4">Regulated by guanine nucleotide exchange factors (GEFs) which promote the exchange of bound GDP for free GTP, GTPase activating proteins (GAPs) which increase the GTP hydrolysis activity, and GDP dissociation inhibitors (GDIs) which inhibit the dissociation of the nucleotide from the GTPase (By similarity). Activated in response to insulin (By similarity).</text>
</comment>
<comment type="subcellular location">
    <subcellularLocation>
        <location evidence="3">Cell membrane</location>
        <topology evidence="3">Lipid-anchor</topology>
        <orientation evidence="3">Cytoplasmic side</orientation>
    </subcellularLocation>
    <subcellularLocation>
        <location evidence="4">Golgi apparatus</location>
    </subcellularLocation>
    <subcellularLocation>
        <location evidence="4">Endosome membrane</location>
    </subcellularLocation>
    <subcellularLocation>
        <location evidence="4">Recycling endosome membrane</location>
    </subcellularLocation>
    <subcellularLocation>
        <location evidence="4">Cell projection</location>
        <location evidence="4">Cilium</location>
    </subcellularLocation>
    <subcellularLocation>
        <location evidence="4 6">Cytoplasmic vesicle</location>
        <location evidence="4 6">Phagosome membrane</location>
        <topology evidence="6">Lipid-anchor</topology>
        <orientation evidence="6">Cytoplasmic side</orientation>
    </subcellularLocation>
    <subcellularLocation>
        <location evidence="3">Cytoplasm</location>
        <location evidence="3">Cytoskeleton</location>
        <location evidence="3">Microtubule organizing center</location>
        <location evidence="3">Centrosome</location>
        <location evidence="3">Centriole</location>
    </subcellularLocation>
    <subcellularLocation>
        <location evidence="3">Cytoplasm</location>
        <location evidence="3">Cytoskeleton</location>
        <location evidence="3">Cilium basal body</location>
    </subcellularLocation>
    <subcellularLocation>
        <location evidence="4">Midbody</location>
    </subcellularLocation>
    <subcellularLocation>
        <location evidence="4">Cytoplasm</location>
    </subcellularLocation>
</comment>
<comment type="domain">
    <text evidence="5">Switch 1, switch 2 and the interswitch regions are characteristic of Rab GTPases and mediate the interactions with Rab downstream effectors. The switch regions undergo conformational changes upon nucleotide binding which drives interaction with specific sets of effector proteins, with most effectors only binding to GTP-bound Rab.</text>
</comment>
<comment type="similarity">
    <text evidence="8">Belongs to the small GTPase superfamily. Rab family.</text>
</comment>
<dbReference type="EC" id="3.6.5.2" evidence="4"/>
<dbReference type="EMBL" id="AJ851430">
    <property type="protein sequence ID" value="CAH65064.1"/>
    <property type="molecule type" value="mRNA"/>
</dbReference>
<dbReference type="RefSeq" id="NP_001026675.1">
    <property type="nucleotide sequence ID" value="NM_001031504.1"/>
</dbReference>
<dbReference type="RefSeq" id="NP_001384253.1">
    <property type="nucleotide sequence ID" value="NM_001397324.1"/>
</dbReference>
<dbReference type="SMR" id="Q5F470"/>
<dbReference type="FunCoup" id="Q5F470">
    <property type="interactions" value="3089"/>
</dbReference>
<dbReference type="STRING" id="9031.ENSGALP00000041790"/>
<dbReference type="PaxDb" id="9031-ENSGALP00000041790"/>
<dbReference type="GeneID" id="428352"/>
<dbReference type="KEGG" id="gga:428352"/>
<dbReference type="VEuPathDB" id="HostDB:geneid_428352"/>
<dbReference type="eggNOG" id="KOG0078">
    <property type="taxonomic scope" value="Eukaryota"/>
</dbReference>
<dbReference type="HOGENOM" id="CLU_041217_23_1_1"/>
<dbReference type="InParanoid" id="Q5F470"/>
<dbReference type="OMA" id="SKMEQNE"/>
<dbReference type="OrthoDB" id="9989112at2759"/>
<dbReference type="PhylomeDB" id="Q5F470"/>
<dbReference type="TreeFam" id="TF314097"/>
<dbReference type="Reactome" id="R-GGA-2565942">
    <property type="pathway name" value="Regulation of PLK1 Activity at G2/M Transition"/>
</dbReference>
<dbReference type="Reactome" id="R-GGA-5620912">
    <property type="pathway name" value="Anchoring of the basal body to the plasma membrane"/>
</dbReference>
<dbReference type="Reactome" id="R-GGA-5620916">
    <property type="pathway name" value="VxPx cargo-targeting to cilium"/>
</dbReference>
<dbReference type="Reactome" id="R-GGA-8876198">
    <property type="pathway name" value="RAB GEFs exchange GTP for GDP on RABs"/>
</dbReference>
<dbReference type="PRO" id="PR:Q5F470"/>
<dbReference type="Proteomes" id="UP000000539">
    <property type="component" value="Chromosome 28"/>
</dbReference>
<dbReference type="Bgee" id="ENSGALG00000028851">
    <property type="expression patterns" value="Expressed in spermatocyte and 13 other cell types or tissues"/>
</dbReference>
<dbReference type="GO" id="GO:0005814">
    <property type="term" value="C:centriole"/>
    <property type="evidence" value="ECO:0007669"/>
    <property type="project" value="UniProtKB-SubCell"/>
</dbReference>
<dbReference type="GO" id="GO:0005813">
    <property type="term" value="C:centrosome"/>
    <property type="evidence" value="ECO:0000250"/>
    <property type="project" value="UniProtKB"/>
</dbReference>
<dbReference type="GO" id="GO:0005929">
    <property type="term" value="C:cilium"/>
    <property type="evidence" value="ECO:0007669"/>
    <property type="project" value="UniProtKB-SubCell"/>
</dbReference>
<dbReference type="GO" id="GO:0005768">
    <property type="term" value="C:endosome"/>
    <property type="evidence" value="ECO:0000318"/>
    <property type="project" value="GO_Central"/>
</dbReference>
<dbReference type="GO" id="GO:0010008">
    <property type="term" value="C:endosome membrane"/>
    <property type="evidence" value="ECO:0000250"/>
    <property type="project" value="UniProtKB"/>
</dbReference>
<dbReference type="GO" id="GO:0005794">
    <property type="term" value="C:Golgi apparatus"/>
    <property type="evidence" value="ECO:0007669"/>
    <property type="project" value="UniProtKB-SubCell"/>
</dbReference>
<dbReference type="GO" id="GO:0030496">
    <property type="term" value="C:midbody"/>
    <property type="evidence" value="ECO:0007669"/>
    <property type="project" value="UniProtKB-SubCell"/>
</dbReference>
<dbReference type="GO" id="GO:0030670">
    <property type="term" value="C:phagocytic vesicle membrane"/>
    <property type="evidence" value="ECO:0007669"/>
    <property type="project" value="UniProtKB-SubCell"/>
</dbReference>
<dbReference type="GO" id="GO:0005886">
    <property type="term" value="C:plasma membrane"/>
    <property type="evidence" value="ECO:0000318"/>
    <property type="project" value="GO_Central"/>
</dbReference>
<dbReference type="GO" id="GO:0055038">
    <property type="term" value="C:recycling endosome membrane"/>
    <property type="evidence" value="ECO:0007669"/>
    <property type="project" value="UniProtKB-SubCell"/>
</dbReference>
<dbReference type="GO" id="GO:0008021">
    <property type="term" value="C:synaptic vesicle"/>
    <property type="evidence" value="ECO:0000318"/>
    <property type="project" value="GO_Central"/>
</dbReference>
<dbReference type="GO" id="GO:0030140">
    <property type="term" value="C:trans-Golgi network transport vesicle"/>
    <property type="evidence" value="ECO:0000318"/>
    <property type="project" value="GO_Central"/>
</dbReference>
<dbReference type="GO" id="GO:0019003">
    <property type="term" value="F:GDP binding"/>
    <property type="evidence" value="ECO:0000250"/>
    <property type="project" value="UniProtKB"/>
</dbReference>
<dbReference type="GO" id="GO:0005525">
    <property type="term" value="F:GTP binding"/>
    <property type="evidence" value="ECO:0000250"/>
    <property type="project" value="UniProtKB"/>
</dbReference>
<dbReference type="GO" id="GO:0003924">
    <property type="term" value="F:GTPase activity"/>
    <property type="evidence" value="ECO:0000318"/>
    <property type="project" value="GO_Central"/>
</dbReference>
<dbReference type="GO" id="GO:0031267">
    <property type="term" value="F:small GTPase binding"/>
    <property type="evidence" value="ECO:0000250"/>
    <property type="project" value="UniProtKB"/>
</dbReference>
<dbReference type="GO" id="GO:0007409">
    <property type="term" value="P:axonogenesis"/>
    <property type="evidence" value="ECO:0000250"/>
    <property type="project" value="UniProtKB"/>
</dbReference>
<dbReference type="GO" id="GO:0060271">
    <property type="term" value="P:cilium assembly"/>
    <property type="evidence" value="ECO:0000318"/>
    <property type="project" value="GO_Central"/>
</dbReference>
<dbReference type="GO" id="GO:0032456">
    <property type="term" value="P:endocytic recycling"/>
    <property type="evidence" value="ECO:0000318"/>
    <property type="project" value="GO_Central"/>
</dbReference>
<dbReference type="GO" id="GO:0006887">
    <property type="term" value="P:exocytosis"/>
    <property type="evidence" value="ECO:0000318"/>
    <property type="project" value="GO_Central"/>
</dbReference>
<dbReference type="GO" id="GO:0007030">
    <property type="term" value="P:Golgi organization"/>
    <property type="evidence" value="ECO:0000250"/>
    <property type="project" value="UniProtKB"/>
</dbReference>
<dbReference type="GO" id="GO:0098969">
    <property type="term" value="P:neurotransmitter receptor transport to postsynaptic membrane"/>
    <property type="evidence" value="ECO:0000318"/>
    <property type="project" value="GO_Central"/>
</dbReference>
<dbReference type="CDD" id="cd01867">
    <property type="entry name" value="Rab8_Rab10_Rab13_like"/>
    <property type="match status" value="1"/>
</dbReference>
<dbReference type="FunFam" id="3.40.50.300:FF:000202">
    <property type="entry name" value="ras-related protein Rab-8A"/>
    <property type="match status" value="1"/>
</dbReference>
<dbReference type="Gene3D" id="3.40.50.300">
    <property type="entry name" value="P-loop containing nucleotide triphosphate hydrolases"/>
    <property type="match status" value="1"/>
</dbReference>
<dbReference type="InterPro" id="IPR027417">
    <property type="entry name" value="P-loop_NTPase"/>
</dbReference>
<dbReference type="InterPro" id="IPR005225">
    <property type="entry name" value="Small_GTP-bd"/>
</dbReference>
<dbReference type="InterPro" id="IPR001806">
    <property type="entry name" value="Small_GTPase"/>
</dbReference>
<dbReference type="InterPro" id="IPR050305">
    <property type="entry name" value="Small_GTPase_Rab"/>
</dbReference>
<dbReference type="NCBIfam" id="TIGR00231">
    <property type="entry name" value="small_GTP"/>
    <property type="match status" value="1"/>
</dbReference>
<dbReference type="PANTHER" id="PTHR47980">
    <property type="entry name" value="LD44762P"/>
    <property type="match status" value="1"/>
</dbReference>
<dbReference type="Pfam" id="PF00071">
    <property type="entry name" value="Ras"/>
    <property type="match status" value="1"/>
</dbReference>
<dbReference type="PRINTS" id="PR00449">
    <property type="entry name" value="RASTRNSFRMNG"/>
</dbReference>
<dbReference type="SMART" id="SM00177">
    <property type="entry name" value="ARF"/>
    <property type="match status" value="1"/>
</dbReference>
<dbReference type="SMART" id="SM00175">
    <property type="entry name" value="RAB"/>
    <property type="match status" value="1"/>
</dbReference>
<dbReference type="SMART" id="SM00176">
    <property type="entry name" value="RAN"/>
    <property type="match status" value="1"/>
</dbReference>
<dbReference type="SMART" id="SM00173">
    <property type="entry name" value="RAS"/>
    <property type="match status" value="1"/>
</dbReference>
<dbReference type="SMART" id="SM00174">
    <property type="entry name" value="RHO"/>
    <property type="match status" value="1"/>
</dbReference>
<dbReference type="SUPFAM" id="SSF52540">
    <property type="entry name" value="P-loop containing nucleoside triphosphate hydrolases"/>
    <property type="match status" value="1"/>
</dbReference>
<dbReference type="PROSITE" id="PS51419">
    <property type="entry name" value="RAB"/>
    <property type="match status" value="1"/>
</dbReference>
<protein>
    <recommendedName>
        <fullName>Ras-related protein Rab-8A</fullName>
        <ecNumber evidence="4">3.6.5.2</ecNumber>
    </recommendedName>
</protein>
<reference key="1">
    <citation type="journal article" date="2005" name="Genome Biol.">
        <title>Full-length cDNAs from chicken bursal lymphocytes to facilitate gene function analysis.</title>
        <authorList>
            <person name="Caldwell R.B."/>
            <person name="Kierzek A.M."/>
            <person name="Arakawa H."/>
            <person name="Bezzubov Y."/>
            <person name="Zaim J."/>
            <person name="Fiedler P."/>
            <person name="Kutter S."/>
            <person name="Blagodatski A."/>
            <person name="Kostovska D."/>
            <person name="Koter M."/>
            <person name="Plachy J."/>
            <person name="Carninci P."/>
            <person name="Hayashizaki Y."/>
            <person name="Buerstedde J.-M."/>
        </authorList>
    </citation>
    <scope>NUCLEOTIDE SEQUENCE [LARGE SCALE MRNA]</scope>
    <source>
        <strain>CB</strain>
        <tissue>Bursa of Fabricius</tissue>
    </source>
</reference>
<name>RAB8A_CHICK</name>
<proteinExistence type="evidence at transcript level"/>